<evidence type="ECO:0000255" key="1">
    <source>
        <dbReference type="HAMAP-Rule" id="MF_00409"/>
    </source>
</evidence>
<keyword id="KW-0067">ATP-binding</keyword>
<keyword id="KW-0418">Kinase</keyword>
<keyword id="KW-0441">Lipid A biosynthesis</keyword>
<keyword id="KW-0444">Lipid biosynthesis</keyword>
<keyword id="KW-0443">Lipid metabolism</keyword>
<keyword id="KW-0547">Nucleotide-binding</keyword>
<keyword id="KW-1185">Reference proteome</keyword>
<keyword id="KW-0808">Transferase</keyword>
<name>LPXK_WIGBR</name>
<comment type="function">
    <text evidence="1">Transfers the gamma-phosphate of ATP to the 4'-position of a tetraacyldisaccharide 1-phosphate intermediate (termed DS-1-P) to form tetraacyldisaccharide 1,4'-bis-phosphate (lipid IVA).</text>
</comment>
<comment type="catalytic activity">
    <reaction evidence="1">
        <text>a lipid A disaccharide + ATP = a lipid IVA + ADP + H(+)</text>
        <dbReference type="Rhea" id="RHEA:67840"/>
        <dbReference type="ChEBI" id="CHEBI:15378"/>
        <dbReference type="ChEBI" id="CHEBI:30616"/>
        <dbReference type="ChEBI" id="CHEBI:176343"/>
        <dbReference type="ChEBI" id="CHEBI:176425"/>
        <dbReference type="ChEBI" id="CHEBI:456216"/>
        <dbReference type="EC" id="2.7.1.130"/>
    </reaction>
</comment>
<comment type="pathway">
    <text evidence="1">Glycolipid biosynthesis; lipid IV(A) biosynthesis; lipid IV(A) from (3R)-3-hydroxytetradecanoyl-[acyl-carrier-protein] and UDP-N-acetyl-alpha-D-glucosamine: step 6/6.</text>
</comment>
<comment type="similarity">
    <text evidence="1">Belongs to the LpxK family.</text>
</comment>
<dbReference type="EC" id="2.7.1.130" evidence="1"/>
<dbReference type="EMBL" id="BA000021">
    <property type="protein sequence ID" value="BAC24399.1"/>
    <property type="molecule type" value="Genomic_DNA"/>
</dbReference>
<dbReference type="SMR" id="Q8D2U9"/>
<dbReference type="STRING" id="36870.gene:10368746"/>
<dbReference type="KEGG" id="wbr:ycaH"/>
<dbReference type="eggNOG" id="COG1663">
    <property type="taxonomic scope" value="Bacteria"/>
</dbReference>
<dbReference type="HOGENOM" id="CLU_038816_2_0_6"/>
<dbReference type="OrthoDB" id="9766423at2"/>
<dbReference type="UniPathway" id="UPA00359">
    <property type="reaction ID" value="UER00482"/>
</dbReference>
<dbReference type="Proteomes" id="UP000000562">
    <property type="component" value="Chromosome"/>
</dbReference>
<dbReference type="GO" id="GO:0005886">
    <property type="term" value="C:plasma membrane"/>
    <property type="evidence" value="ECO:0007669"/>
    <property type="project" value="TreeGrafter"/>
</dbReference>
<dbReference type="GO" id="GO:0005524">
    <property type="term" value="F:ATP binding"/>
    <property type="evidence" value="ECO:0007669"/>
    <property type="project" value="UniProtKB-UniRule"/>
</dbReference>
<dbReference type="GO" id="GO:0009029">
    <property type="term" value="F:tetraacyldisaccharide 4'-kinase activity"/>
    <property type="evidence" value="ECO:0007669"/>
    <property type="project" value="UniProtKB-UniRule"/>
</dbReference>
<dbReference type="GO" id="GO:0009245">
    <property type="term" value="P:lipid A biosynthetic process"/>
    <property type="evidence" value="ECO:0007669"/>
    <property type="project" value="UniProtKB-UniRule"/>
</dbReference>
<dbReference type="GO" id="GO:0009244">
    <property type="term" value="P:lipopolysaccharide core region biosynthetic process"/>
    <property type="evidence" value="ECO:0007669"/>
    <property type="project" value="TreeGrafter"/>
</dbReference>
<dbReference type="HAMAP" id="MF_00409">
    <property type="entry name" value="LpxK"/>
    <property type="match status" value="1"/>
</dbReference>
<dbReference type="InterPro" id="IPR003758">
    <property type="entry name" value="LpxK"/>
</dbReference>
<dbReference type="InterPro" id="IPR027417">
    <property type="entry name" value="P-loop_NTPase"/>
</dbReference>
<dbReference type="NCBIfam" id="TIGR00682">
    <property type="entry name" value="lpxK"/>
    <property type="match status" value="1"/>
</dbReference>
<dbReference type="PANTHER" id="PTHR42724">
    <property type="entry name" value="TETRAACYLDISACCHARIDE 4'-KINASE"/>
    <property type="match status" value="1"/>
</dbReference>
<dbReference type="PANTHER" id="PTHR42724:SF1">
    <property type="entry name" value="TETRAACYLDISACCHARIDE 4'-KINASE, MITOCHONDRIAL-RELATED"/>
    <property type="match status" value="1"/>
</dbReference>
<dbReference type="Pfam" id="PF02606">
    <property type="entry name" value="LpxK"/>
    <property type="match status" value="1"/>
</dbReference>
<dbReference type="SUPFAM" id="SSF52540">
    <property type="entry name" value="P-loop containing nucleoside triphosphate hydrolases"/>
    <property type="match status" value="1"/>
</dbReference>
<reference key="1">
    <citation type="journal article" date="2002" name="Nat. Genet.">
        <title>Genome sequence of the endocellular obligate symbiont of tsetse flies, Wigglesworthia glossinidia.</title>
        <authorList>
            <person name="Akman L."/>
            <person name="Yamashita A."/>
            <person name="Watanabe H."/>
            <person name="Oshima K."/>
            <person name="Shiba T."/>
            <person name="Hattori M."/>
            <person name="Aksoy S."/>
        </authorList>
    </citation>
    <scope>NUCLEOTIDE SEQUENCE [LARGE SCALE GENOMIC DNA]</scope>
</reference>
<organism>
    <name type="scientific">Wigglesworthia glossinidia brevipalpis</name>
    <dbReference type="NCBI Taxonomy" id="36870"/>
    <lineage>
        <taxon>Bacteria</taxon>
        <taxon>Pseudomonadati</taxon>
        <taxon>Pseudomonadota</taxon>
        <taxon>Gammaproteobacteria</taxon>
        <taxon>Enterobacterales</taxon>
        <taxon>Erwiniaceae</taxon>
        <taxon>Wigglesworthia</taxon>
    </lineage>
</organism>
<proteinExistence type="inferred from homology"/>
<sequence>MRKSTVYSWINKKKYILKINVISIINYIWFKKTIMRFFLYPFSLIYFLVIKIIYILYKCNFKKTYNFNIPIIVIGNITVGGNGKTPLVIWLSKQLKKRKWKVGVVSRGYGRKYDFPIIINSNFTHDICGDEPILIHKRSNVPVAVSSNRILAIKMLLEYYNLDIIISDDGLQHHSMGRCIEWIVIDNNRKFGNNLLLPAGPMRETKKKLNKVNKVIINGCCRNKNIIKMNLYHKNYVINLLNGSKKRLNDLFPTILISGISNNKNFFSMVRKSGIIPIREISFPDHYIYDKNILTSLTKNNEHLLMTEKDSIKCKYFAKINWWYLPIYVFFSKKCKEVLLSSVEKKIIIFKFKNKKNNIFNKI</sequence>
<protein>
    <recommendedName>
        <fullName evidence="1">Tetraacyldisaccharide 4'-kinase</fullName>
        <ecNumber evidence="1">2.7.1.130</ecNumber>
    </recommendedName>
    <alternativeName>
        <fullName evidence="1">Lipid A 4'-kinase</fullName>
    </alternativeName>
</protein>
<gene>
    <name evidence="1" type="primary">lpxK</name>
    <name type="ordered locus">WIGBR2530</name>
</gene>
<accession>Q8D2U9</accession>
<feature type="chain" id="PRO_0000190957" description="Tetraacyldisaccharide 4'-kinase">
    <location>
        <begin position="1"/>
        <end position="363"/>
    </location>
</feature>
<feature type="binding site" evidence="1">
    <location>
        <begin position="78"/>
        <end position="85"/>
    </location>
    <ligand>
        <name>ATP</name>
        <dbReference type="ChEBI" id="CHEBI:30616"/>
    </ligand>
</feature>